<dbReference type="EMBL" id="AE001437">
    <property type="protein sequence ID" value="AAK81071.1"/>
    <property type="molecule type" value="Genomic_DNA"/>
</dbReference>
<dbReference type="PIR" id="D97285">
    <property type="entry name" value="D97285"/>
</dbReference>
<dbReference type="RefSeq" id="NP_349731.1">
    <property type="nucleotide sequence ID" value="NC_003030.1"/>
</dbReference>
<dbReference type="RefSeq" id="WP_010966411.1">
    <property type="nucleotide sequence ID" value="NC_003030.1"/>
</dbReference>
<dbReference type="SMR" id="Q97EH9"/>
<dbReference type="STRING" id="272562.CA_C3132"/>
<dbReference type="GeneID" id="44999619"/>
<dbReference type="KEGG" id="cac:CA_C3132"/>
<dbReference type="PATRIC" id="fig|272562.8.peg.3315"/>
<dbReference type="eggNOG" id="COG0088">
    <property type="taxonomic scope" value="Bacteria"/>
</dbReference>
<dbReference type="HOGENOM" id="CLU_041575_5_2_9"/>
<dbReference type="OrthoDB" id="9803201at2"/>
<dbReference type="Proteomes" id="UP000000814">
    <property type="component" value="Chromosome"/>
</dbReference>
<dbReference type="GO" id="GO:1990904">
    <property type="term" value="C:ribonucleoprotein complex"/>
    <property type="evidence" value="ECO:0007669"/>
    <property type="project" value="UniProtKB-KW"/>
</dbReference>
<dbReference type="GO" id="GO:0005840">
    <property type="term" value="C:ribosome"/>
    <property type="evidence" value="ECO:0007669"/>
    <property type="project" value="UniProtKB-KW"/>
</dbReference>
<dbReference type="GO" id="GO:0019843">
    <property type="term" value="F:rRNA binding"/>
    <property type="evidence" value="ECO:0007669"/>
    <property type="project" value="UniProtKB-UniRule"/>
</dbReference>
<dbReference type="GO" id="GO:0003735">
    <property type="term" value="F:structural constituent of ribosome"/>
    <property type="evidence" value="ECO:0007669"/>
    <property type="project" value="InterPro"/>
</dbReference>
<dbReference type="GO" id="GO:0006412">
    <property type="term" value="P:translation"/>
    <property type="evidence" value="ECO:0007669"/>
    <property type="project" value="UniProtKB-UniRule"/>
</dbReference>
<dbReference type="Gene3D" id="3.40.1370.10">
    <property type="match status" value="1"/>
</dbReference>
<dbReference type="HAMAP" id="MF_01328_B">
    <property type="entry name" value="Ribosomal_uL4_B"/>
    <property type="match status" value="1"/>
</dbReference>
<dbReference type="InterPro" id="IPR002136">
    <property type="entry name" value="Ribosomal_uL4"/>
</dbReference>
<dbReference type="InterPro" id="IPR013005">
    <property type="entry name" value="Ribosomal_uL4-like"/>
</dbReference>
<dbReference type="InterPro" id="IPR023574">
    <property type="entry name" value="Ribosomal_uL4_dom_sf"/>
</dbReference>
<dbReference type="NCBIfam" id="TIGR03953">
    <property type="entry name" value="rplD_bact"/>
    <property type="match status" value="1"/>
</dbReference>
<dbReference type="PANTHER" id="PTHR10746">
    <property type="entry name" value="50S RIBOSOMAL PROTEIN L4"/>
    <property type="match status" value="1"/>
</dbReference>
<dbReference type="PANTHER" id="PTHR10746:SF6">
    <property type="entry name" value="LARGE RIBOSOMAL SUBUNIT PROTEIN UL4M"/>
    <property type="match status" value="1"/>
</dbReference>
<dbReference type="Pfam" id="PF00573">
    <property type="entry name" value="Ribosomal_L4"/>
    <property type="match status" value="1"/>
</dbReference>
<dbReference type="SUPFAM" id="SSF52166">
    <property type="entry name" value="Ribosomal protein L4"/>
    <property type="match status" value="1"/>
</dbReference>
<accession>Q97EH9</accession>
<evidence type="ECO:0000255" key="1">
    <source>
        <dbReference type="HAMAP-Rule" id="MF_01328"/>
    </source>
</evidence>
<evidence type="ECO:0000256" key="2">
    <source>
        <dbReference type="SAM" id="MobiDB-lite"/>
    </source>
</evidence>
<evidence type="ECO:0000305" key="3"/>
<organism>
    <name type="scientific">Clostridium acetobutylicum (strain ATCC 824 / DSM 792 / JCM 1419 / IAM 19013 / LMG 5710 / NBRC 13948 / NRRL B-527 / VKM B-1787 / 2291 / W)</name>
    <dbReference type="NCBI Taxonomy" id="272562"/>
    <lineage>
        <taxon>Bacteria</taxon>
        <taxon>Bacillati</taxon>
        <taxon>Bacillota</taxon>
        <taxon>Clostridia</taxon>
        <taxon>Eubacteriales</taxon>
        <taxon>Clostridiaceae</taxon>
        <taxon>Clostridium</taxon>
    </lineage>
</organism>
<reference key="1">
    <citation type="journal article" date="2001" name="J. Bacteriol.">
        <title>Genome sequence and comparative analysis of the solvent-producing bacterium Clostridium acetobutylicum.</title>
        <authorList>
            <person name="Noelling J."/>
            <person name="Breton G."/>
            <person name="Omelchenko M.V."/>
            <person name="Makarova K.S."/>
            <person name="Zeng Q."/>
            <person name="Gibson R."/>
            <person name="Lee H.M."/>
            <person name="Dubois J."/>
            <person name="Qiu D."/>
            <person name="Hitti J."/>
            <person name="Wolf Y.I."/>
            <person name="Tatusov R.L."/>
            <person name="Sabathe F."/>
            <person name="Doucette-Stamm L.A."/>
            <person name="Soucaille P."/>
            <person name="Daly M.J."/>
            <person name="Bennett G.N."/>
            <person name="Koonin E.V."/>
            <person name="Smith D.R."/>
        </authorList>
    </citation>
    <scope>NUCLEOTIDE SEQUENCE [LARGE SCALE GENOMIC DNA]</scope>
    <source>
        <strain>ATCC 824 / DSM 792 / JCM 1419 / IAM 19013 / LMG 5710 / NBRC 13948 / NRRL B-527 / VKM B-1787 / 2291 / W</strain>
    </source>
</reference>
<keyword id="KW-1185">Reference proteome</keyword>
<keyword id="KW-0687">Ribonucleoprotein</keyword>
<keyword id="KW-0689">Ribosomal protein</keyword>
<keyword id="KW-0694">RNA-binding</keyword>
<keyword id="KW-0699">rRNA-binding</keyword>
<gene>
    <name evidence="1" type="primary">rplD</name>
    <name type="ordered locus">CA_C3132</name>
</gene>
<sequence>MPTVEVFNKEGKKVEDIELSEKVFGAKISESALHQVVVAQLANKRQGTQSAKTRTEVSGGGIKPWRQKGTGRARQGSIRAPQWIHGGVVFAPKPRDYRISIPKSMRRTAMLSALTSKVNDKEMIVLDELKIDAPKTKEIVKMLNAFEAKKALIVVAESDQNVYKSVRNIQGAAVIPANNLNVYDILKYDKFIVTKEAVSKIEEVYA</sequence>
<name>RL4_CLOAB</name>
<proteinExistence type="inferred from homology"/>
<protein>
    <recommendedName>
        <fullName evidence="1">Large ribosomal subunit protein uL4</fullName>
    </recommendedName>
    <alternativeName>
        <fullName evidence="3">50S ribosomal protein L4</fullName>
    </alternativeName>
</protein>
<feature type="chain" id="PRO_0000129207" description="Large ribosomal subunit protein uL4">
    <location>
        <begin position="1"/>
        <end position="206"/>
    </location>
</feature>
<feature type="region of interest" description="Disordered" evidence="2">
    <location>
        <begin position="45"/>
        <end position="76"/>
    </location>
</feature>
<comment type="function">
    <text evidence="1">One of the primary rRNA binding proteins, this protein initially binds near the 5'-end of the 23S rRNA. It is important during the early stages of 50S assembly. It makes multiple contacts with different domains of the 23S rRNA in the assembled 50S subunit and ribosome.</text>
</comment>
<comment type="function">
    <text evidence="1">Forms part of the polypeptide exit tunnel.</text>
</comment>
<comment type="subunit">
    <text evidence="1">Part of the 50S ribosomal subunit.</text>
</comment>
<comment type="similarity">
    <text evidence="1">Belongs to the universal ribosomal protein uL4 family.</text>
</comment>